<protein>
    <recommendedName>
        <fullName evidence="5">Hemoglobin subunit alpha</fullName>
    </recommendedName>
</protein>
<keyword id="KW-0007">Acetylation</keyword>
<keyword id="KW-0903">Direct protein sequencing</keyword>
<keyword id="KW-0349">Heme</keyword>
<keyword id="KW-0408">Iron</keyword>
<keyword id="KW-0479">Metal-binding</keyword>
<keyword id="KW-0561">Oxygen transport</keyword>
<keyword id="KW-0597">Phosphoprotein</keyword>
<keyword id="KW-0813">Transport</keyword>
<evidence type="ECO:0000250" key="1">
    <source>
        <dbReference type="UniProtKB" id="P01942"/>
    </source>
</evidence>
<evidence type="ECO:0000250" key="2">
    <source>
        <dbReference type="UniProtKB" id="P69905"/>
    </source>
</evidence>
<evidence type="ECO:0000255" key="3">
    <source>
        <dbReference type="PROSITE-ProRule" id="PRU00238"/>
    </source>
</evidence>
<evidence type="ECO:0000269" key="4">
    <source>
    </source>
</evidence>
<evidence type="ECO:0000303" key="5">
    <source>
    </source>
</evidence>
<evidence type="ECO:0000305" key="6"/>
<reference evidence="6" key="1">
    <citation type="journal article" date="2012" name="Biol. Chem.">
        <title>Development of a host blood meal database: de novo sequencing of hemoglobin from nine small mammals using mass spectrometry.</title>
        <authorList>
            <person name="Laskay U.A."/>
            <person name="Burg J."/>
            <person name="Kaleta E.J."/>
            <person name="Vilcins I.M."/>
            <person name="Telford Iii S.R."/>
            <person name="Barbour A.G."/>
            <person name="Wysocki V.H."/>
        </authorList>
    </citation>
    <scope>PROTEIN SEQUENCE</scope>
    <source>
        <tissue evidence="4">Erythrocyte</tissue>
    </source>
</reference>
<dbReference type="SMR" id="B3EWD7"/>
<dbReference type="GO" id="GO:0072562">
    <property type="term" value="C:blood microparticle"/>
    <property type="evidence" value="ECO:0007669"/>
    <property type="project" value="TreeGrafter"/>
</dbReference>
<dbReference type="GO" id="GO:0031838">
    <property type="term" value="C:haptoglobin-hemoglobin complex"/>
    <property type="evidence" value="ECO:0007669"/>
    <property type="project" value="TreeGrafter"/>
</dbReference>
<dbReference type="GO" id="GO:0005833">
    <property type="term" value="C:hemoglobin complex"/>
    <property type="evidence" value="ECO:0007669"/>
    <property type="project" value="InterPro"/>
</dbReference>
<dbReference type="GO" id="GO:0031720">
    <property type="term" value="F:haptoglobin binding"/>
    <property type="evidence" value="ECO:0007669"/>
    <property type="project" value="TreeGrafter"/>
</dbReference>
<dbReference type="GO" id="GO:0020037">
    <property type="term" value="F:heme binding"/>
    <property type="evidence" value="ECO:0007669"/>
    <property type="project" value="InterPro"/>
</dbReference>
<dbReference type="GO" id="GO:0005506">
    <property type="term" value="F:iron ion binding"/>
    <property type="evidence" value="ECO:0007669"/>
    <property type="project" value="InterPro"/>
</dbReference>
<dbReference type="GO" id="GO:0043177">
    <property type="term" value="F:organic acid binding"/>
    <property type="evidence" value="ECO:0007669"/>
    <property type="project" value="TreeGrafter"/>
</dbReference>
<dbReference type="GO" id="GO:0019825">
    <property type="term" value="F:oxygen binding"/>
    <property type="evidence" value="ECO:0007669"/>
    <property type="project" value="InterPro"/>
</dbReference>
<dbReference type="GO" id="GO:0005344">
    <property type="term" value="F:oxygen carrier activity"/>
    <property type="evidence" value="ECO:0007669"/>
    <property type="project" value="UniProtKB-KW"/>
</dbReference>
<dbReference type="GO" id="GO:0004601">
    <property type="term" value="F:peroxidase activity"/>
    <property type="evidence" value="ECO:0007669"/>
    <property type="project" value="TreeGrafter"/>
</dbReference>
<dbReference type="GO" id="GO:0042744">
    <property type="term" value="P:hydrogen peroxide catabolic process"/>
    <property type="evidence" value="ECO:0007669"/>
    <property type="project" value="TreeGrafter"/>
</dbReference>
<dbReference type="CDD" id="cd08927">
    <property type="entry name" value="Hb-alpha-like"/>
    <property type="match status" value="1"/>
</dbReference>
<dbReference type="FunFam" id="1.10.490.10:FF:000002">
    <property type="entry name" value="Hemoglobin subunit alpha"/>
    <property type="match status" value="1"/>
</dbReference>
<dbReference type="Gene3D" id="1.10.490.10">
    <property type="entry name" value="Globins"/>
    <property type="match status" value="1"/>
</dbReference>
<dbReference type="InterPro" id="IPR000971">
    <property type="entry name" value="Globin"/>
</dbReference>
<dbReference type="InterPro" id="IPR009050">
    <property type="entry name" value="Globin-like_sf"/>
</dbReference>
<dbReference type="InterPro" id="IPR012292">
    <property type="entry name" value="Globin/Proto"/>
</dbReference>
<dbReference type="InterPro" id="IPR002338">
    <property type="entry name" value="Hemoglobin_a-typ"/>
</dbReference>
<dbReference type="InterPro" id="IPR050056">
    <property type="entry name" value="Hemoglobin_oxygen_transport"/>
</dbReference>
<dbReference type="InterPro" id="IPR002339">
    <property type="entry name" value="Hemoglobin_pi"/>
</dbReference>
<dbReference type="PANTHER" id="PTHR11442">
    <property type="entry name" value="HEMOGLOBIN FAMILY MEMBER"/>
    <property type="match status" value="1"/>
</dbReference>
<dbReference type="PANTHER" id="PTHR11442:SF48">
    <property type="entry name" value="HEMOGLOBIN SUBUNIT ALPHA"/>
    <property type="match status" value="1"/>
</dbReference>
<dbReference type="Pfam" id="PF00042">
    <property type="entry name" value="Globin"/>
    <property type="match status" value="1"/>
</dbReference>
<dbReference type="PRINTS" id="PR00612">
    <property type="entry name" value="ALPHAHAEM"/>
</dbReference>
<dbReference type="PRINTS" id="PR00815">
    <property type="entry name" value="PIHAEM"/>
</dbReference>
<dbReference type="SUPFAM" id="SSF46458">
    <property type="entry name" value="Globin-like"/>
    <property type="match status" value="1"/>
</dbReference>
<dbReference type="PROSITE" id="PS01033">
    <property type="entry name" value="GLOBIN"/>
    <property type="match status" value="1"/>
</dbReference>
<accession>B3EWD7</accession>
<name>HBA_TAMHU</name>
<proteinExistence type="evidence at protein level"/>
<comment type="function">
    <text evidence="6">Involved in oxygen transport from the lung to the various peripheral tissues.</text>
</comment>
<comment type="subunit">
    <text evidence="6">Heterotetramer of two alpha chains and two beta chains.</text>
</comment>
<comment type="tissue specificity">
    <text evidence="6">Red blood cells.</text>
</comment>
<comment type="similarity">
    <text evidence="3">Belongs to the globin family.</text>
</comment>
<feature type="chain" id="PRO_0000415590" description="Hemoglobin subunit alpha">
    <location>
        <begin position="1"/>
        <end position="141"/>
    </location>
</feature>
<feature type="domain" description="Globin" evidence="3">
    <location>
        <begin position="1"/>
        <end position="141"/>
    </location>
</feature>
<feature type="binding site" evidence="3">
    <location>
        <position position="58"/>
    </location>
    <ligand>
        <name>O2</name>
        <dbReference type="ChEBI" id="CHEBI:15379"/>
    </ligand>
</feature>
<feature type="binding site" description="proximal binding residue" evidence="3">
    <location>
        <position position="87"/>
    </location>
    <ligand>
        <name>heme b</name>
        <dbReference type="ChEBI" id="CHEBI:60344"/>
    </ligand>
    <ligandPart>
        <name>Fe</name>
        <dbReference type="ChEBI" id="CHEBI:18248"/>
    </ligandPart>
</feature>
<feature type="modified residue" description="Phosphoserine" evidence="2">
    <location>
        <position position="3"/>
    </location>
</feature>
<feature type="modified residue" description="N6-succinyllysine" evidence="1">
    <location>
        <position position="7"/>
    </location>
</feature>
<feature type="modified residue" description="Phosphothreonine" evidence="2">
    <location>
        <position position="8"/>
    </location>
</feature>
<feature type="modified residue" description="N6-succinyllysine" evidence="1">
    <location>
        <position position="11"/>
    </location>
</feature>
<feature type="modified residue" description="N6-acetyllysine; alternate" evidence="2">
    <location>
        <position position="16"/>
    </location>
</feature>
<feature type="modified residue" description="N6-succinyllysine; alternate" evidence="1">
    <location>
        <position position="16"/>
    </location>
</feature>
<feature type="modified residue" description="Phosphotyrosine" evidence="2">
    <location>
        <position position="24"/>
    </location>
</feature>
<feature type="modified residue" description="Phosphoserine" evidence="2">
    <location>
        <position position="35"/>
    </location>
</feature>
<feature type="modified residue" description="N6-succinyllysine" evidence="1">
    <location>
        <position position="40"/>
    </location>
</feature>
<feature type="modified residue" description="Phosphoserine" evidence="2">
    <location>
        <position position="49"/>
    </location>
</feature>
<feature type="modified residue" description="Phosphoserine" evidence="1">
    <location>
        <position position="102"/>
    </location>
</feature>
<feature type="modified residue" description="Phosphothreonine" evidence="1">
    <location>
        <position position="108"/>
    </location>
</feature>
<feature type="modified residue" description="Phosphoserine" evidence="1">
    <location>
        <position position="124"/>
    </location>
</feature>
<feature type="modified residue" description="Phosphoserine" evidence="1">
    <location>
        <position position="131"/>
    </location>
</feature>
<feature type="modified residue" description="Phosphothreonine" evidence="1">
    <location>
        <position position="134"/>
    </location>
</feature>
<feature type="modified residue" description="Phosphothreonine" evidence="1">
    <location>
        <position position="137"/>
    </location>
</feature>
<feature type="modified residue" description="Phosphoserine" evidence="1">
    <location>
        <position position="138"/>
    </location>
</feature>
<feature type="unsure residue" description="L or I" evidence="4">
    <location>
        <position position="2"/>
    </location>
</feature>
<feature type="unsure residue" description="L or I" evidence="4">
    <location>
        <position position="17"/>
    </location>
</feature>
<feature type="unsure residue" description="L or I" evidence="4">
    <location>
        <position position="29"/>
    </location>
</feature>
<feature type="unsure residue" description="L or I" evidence="4">
    <location>
        <position position="34"/>
    </location>
</feature>
<feature type="unsure residue" description="L or I" evidence="4">
    <location>
        <position position="48"/>
    </location>
</feature>
<feature type="unsure residue" description="L or I" evidence="4">
    <location>
        <position position="66"/>
    </location>
</feature>
<feature type="unsure residue" description="L or I" evidence="4">
    <location>
        <position position="73"/>
    </location>
</feature>
<feature type="unsure residue" description="L or I" evidence="4">
    <location>
        <position position="76"/>
    </location>
</feature>
<feature type="unsure residue" description="L or I" evidence="4">
    <location>
        <position position="80"/>
    </location>
</feature>
<feature type="unsure residue" description="L or I" evidence="4">
    <location>
        <position position="83"/>
    </location>
</feature>
<feature type="unsure residue" description="L or I" evidence="4">
    <location>
        <position position="86"/>
    </location>
</feature>
<feature type="unsure residue" description="L or I" evidence="4">
    <location>
        <position position="91"/>
    </location>
</feature>
<feature type="unsure residue" description="L or I" evidence="4">
    <location>
        <position position="100"/>
    </location>
</feature>
<feature type="unsure residue" description="L or I" evidence="4">
    <location>
        <position position="101"/>
    </location>
</feature>
<feature type="unsure residue" description="L or I" evidence="4">
    <location>
        <position position="105"/>
    </location>
</feature>
<feature type="unsure residue" description="L or I" evidence="4">
    <location>
        <position position="106"/>
    </location>
</feature>
<feature type="unsure residue" description="L or I" evidence="4">
    <location>
        <position position="109"/>
    </location>
</feature>
<feature type="unsure residue" description="L or I" evidence="4">
    <location>
        <position position="125"/>
    </location>
</feature>
<feature type="unsure residue" description="L or I" evidence="4">
    <location>
        <position position="129"/>
    </location>
</feature>
<feature type="unsure residue" description="L or I" evidence="4">
    <location>
        <position position="136"/>
    </location>
</feature>
<organism>
    <name type="scientific">Tamiasciurus hudsonicus</name>
    <name type="common">American red squirrel</name>
    <name type="synonym">Sciurus hudsonicus</name>
    <dbReference type="NCBI Taxonomy" id="10009"/>
    <lineage>
        <taxon>Eukaryota</taxon>
        <taxon>Metazoa</taxon>
        <taxon>Chordata</taxon>
        <taxon>Craniata</taxon>
        <taxon>Vertebrata</taxon>
        <taxon>Euteleostomi</taxon>
        <taxon>Mammalia</taxon>
        <taxon>Eutheria</taxon>
        <taxon>Euarchontoglires</taxon>
        <taxon>Glires</taxon>
        <taxon>Rodentia</taxon>
        <taxon>Sciuromorpha</taxon>
        <taxon>Sciuridae</taxon>
        <taxon>Sciurinae</taxon>
        <taxon>Tamiasciurini</taxon>
        <taxon>Tamiasciurus</taxon>
    </lineage>
</organism>
<sequence>VLSAADKTNVKSAWDKLGGHGAEYGAEALGRMFLSFPTTKTYPFHFDLSHGSAQPQGHGKKVAEALATAAGHLDDLPGALSALSDLHAHKLRVDPVNFKLLSHCLLVTLAAHMPAEFTPAVHASLDKFLASVSTVLTSKYR</sequence>